<dbReference type="EMBL" id="X97941">
    <property type="protein sequence ID" value="CAA66600.2"/>
    <property type="molecule type" value="mRNA"/>
</dbReference>
<dbReference type="EMBL" id="AJ224122">
    <property type="protein sequence ID" value="CAB40190.1"/>
    <property type="molecule type" value="Genomic_DNA"/>
</dbReference>
<dbReference type="EMBL" id="AL138642">
    <property type="protein sequence ID" value="CAB71892.1"/>
    <property type="molecule type" value="Genomic_DNA"/>
</dbReference>
<dbReference type="EMBL" id="CP002686">
    <property type="protein sequence ID" value="AEE80266.1"/>
    <property type="molecule type" value="Genomic_DNA"/>
</dbReference>
<dbReference type="EMBL" id="CP002686">
    <property type="protein sequence ID" value="AEE80267.1"/>
    <property type="molecule type" value="Genomic_DNA"/>
</dbReference>
<dbReference type="EMBL" id="CP002686">
    <property type="protein sequence ID" value="AEE80268.1"/>
    <property type="molecule type" value="Genomic_DNA"/>
</dbReference>
<dbReference type="EMBL" id="AK117352">
    <property type="protein sequence ID" value="BAC42022.1"/>
    <property type="molecule type" value="mRNA"/>
</dbReference>
<dbReference type="PIR" id="T47977">
    <property type="entry name" value="T47977"/>
</dbReference>
<dbReference type="RefSeq" id="NP_001078327.1">
    <molecule id="Q43385-2"/>
    <property type="nucleotide sequence ID" value="NM_001084858.1"/>
</dbReference>
<dbReference type="RefSeq" id="NP_191744.1">
    <molecule id="Q43385-1"/>
    <property type="nucleotide sequence ID" value="NM_116050.4"/>
</dbReference>
<dbReference type="RefSeq" id="NP_850734.1">
    <molecule id="Q43385-2"/>
    <property type="nucleotide sequence ID" value="NM_180403.2"/>
</dbReference>
<dbReference type="BioGRID" id="10672">
    <property type="interactions" value="1"/>
</dbReference>
<dbReference type="FunCoup" id="Q43385">
    <property type="interactions" value="468"/>
</dbReference>
<dbReference type="STRING" id="3702.Q43385"/>
<dbReference type="GlyGen" id="Q43385">
    <property type="glycosylation" value="1 site, 1 O-linked glycan (1 site)"/>
</dbReference>
<dbReference type="iPTMnet" id="Q43385"/>
<dbReference type="PaxDb" id="3702-AT3G61850.4"/>
<dbReference type="ProteomicsDB" id="222116">
    <molecule id="Q43385-1"/>
</dbReference>
<dbReference type="EnsemblPlants" id="AT3G61850.1">
    <molecule id="Q43385-1"/>
    <property type="protein sequence ID" value="AT3G61850.1"/>
    <property type="gene ID" value="AT3G61850"/>
</dbReference>
<dbReference type="EnsemblPlants" id="AT3G61850.2">
    <molecule id="Q43385-2"/>
    <property type="protein sequence ID" value="AT3G61850.2"/>
    <property type="gene ID" value="AT3G61850"/>
</dbReference>
<dbReference type="EnsemblPlants" id="AT3G61850.3">
    <molecule id="Q43385-2"/>
    <property type="protein sequence ID" value="AT3G61850.3"/>
    <property type="gene ID" value="AT3G61850"/>
</dbReference>
<dbReference type="GeneID" id="825358"/>
<dbReference type="Gramene" id="AT3G61850.1">
    <molecule id="Q43385-1"/>
    <property type="protein sequence ID" value="AT3G61850.1"/>
    <property type="gene ID" value="AT3G61850"/>
</dbReference>
<dbReference type="Gramene" id="AT3G61850.2">
    <molecule id="Q43385-2"/>
    <property type="protein sequence ID" value="AT3G61850.2"/>
    <property type="gene ID" value="AT3G61850"/>
</dbReference>
<dbReference type="Gramene" id="AT3G61850.3">
    <molecule id="Q43385-2"/>
    <property type="protein sequence ID" value="AT3G61850.3"/>
    <property type="gene ID" value="AT3G61850"/>
</dbReference>
<dbReference type="KEGG" id="ath:AT3G61850"/>
<dbReference type="Araport" id="AT3G61850"/>
<dbReference type="TAIR" id="AT3G61850">
    <property type="gene designation" value="DAG1"/>
</dbReference>
<dbReference type="eggNOG" id="ENOG502REBY">
    <property type="taxonomic scope" value="Eukaryota"/>
</dbReference>
<dbReference type="InParanoid" id="Q43385"/>
<dbReference type="OrthoDB" id="1927254at2759"/>
<dbReference type="PhylomeDB" id="Q43385"/>
<dbReference type="PRO" id="PR:Q43385"/>
<dbReference type="Proteomes" id="UP000006548">
    <property type="component" value="Chromosome 3"/>
</dbReference>
<dbReference type="ExpressionAtlas" id="Q43385">
    <property type="expression patterns" value="baseline and differential"/>
</dbReference>
<dbReference type="GO" id="GO:0005634">
    <property type="term" value="C:nucleus"/>
    <property type="evidence" value="ECO:0007669"/>
    <property type="project" value="UniProtKB-SubCell"/>
</dbReference>
<dbReference type="GO" id="GO:0003677">
    <property type="term" value="F:DNA binding"/>
    <property type="evidence" value="ECO:0007669"/>
    <property type="project" value="UniProtKB-KW"/>
</dbReference>
<dbReference type="GO" id="GO:0003700">
    <property type="term" value="F:DNA-binding transcription factor activity"/>
    <property type="evidence" value="ECO:0007669"/>
    <property type="project" value="InterPro"/>
</dbReference>
<dbReference type="GO" id="GO:0008270">
    <property type="term" value="F:zinc ion binding"/>
    <property type="evidence" value="ECO:0007669"/>
    <property type="project" value="UniProtKB-KW"/>
</dbReference>
<dbReference type="InterPro" id="IPR045174">
    <property type="entry name" value="Dof"/>
</dbReference>
<dbReference type="InterPro" id="IPR003851">
    <property type="entry name" value="Znf_Dof"/>
</dbReference>
<dbReference type="PANTHER" id="PTHR31992">
    <property type="entry name" value="DOF ZINC FINGER PROTEIN DOF1.4-RELATED"/>
    <property type="match status" value="1"/>
</dbReference>
<dbReference type="PANTHER" id="PTHR31992:SF301">
    <property type="entry name" value="DOF ZINC FINGER PROTEIN DOF3.7"/>
    <property type="match status" value="1"/>
</dbReference>
<dbReference type="Pfam" id="PF02701">
    <property type="entry name" value="Zn_ribbon_Dof"/>
    <property type="match status" value="1"/>
</dbReference>
<dbReference type="PROSITE" id="PS01361">
    <property type="entry name" value="ZF_DOF_1"/>
    <property type="match status" value="1"/>
</dbReference>
<dbReference type="PROSITE" id="PS50884">
    <property type="entry name" value="ZF_DOF_2"/>
    <property type="match status" value="1"/>
</dbReference>
<keyword id="KW-0025">Alternative splicing</keyword>
<keyword id="KW-0238">DNA-binding</keyword>
<keyword id="KW-0309">Germination</keyword>
<keyword id="KW-0479">Metal-binding</keyword>
<keyword id="KW-0539">Nucleus</keyword>
<keyword id="KW-1185">Reference proteome</keyword>
<keyword id="KW-0804">Transcription</keyword>
<keyword id="KW-0805">Transcription regulation</keyword>
<keyword id="KW-0862">Zinc</keyword>
<keyword id="KW-0863">Zinc-finger</keyword>
<proteinExistence type="evidence at protein level"/>
<reference key="1">
    <citation type="journal article" date="1996" name="Plant J.">
        <title>A rolB regulatory factor belongs to a new class of single zinc finger plant proteins.</title>
        <authorList>
            <person name="de Paolis A."/>
            <person name="Sabatini S."/>
            <person name="de Pascalis L."/>
            <person name="Costantino P."/>
            <person name="Capone I."/>
        </authorList>
    </citation>
    <scope>NUCLEOTIDE SEQUENCE [GENOMIC DNA / MRNA] (ISOFORM 1)</scope>
    <source>
        <strain>cv. Columbia</strain>
        <strain>cv. Wassilewskija</strain>
    </source>
</reference>
<reference key="2">
    <citation type="journal article" date="2000" name="Genes Dev.">
        <title>Identification and disruption of an Arabidopsis zinc finger gene controlling seed germination.</title>
        <authorList>
            <person name="Papi M."/>
            <person name="Sabatini S."/>
            <person name="Bouchez D."/>
            <person name="Camilleri C."/>
            <person name="Costantino P."/>
            <person name="Vittorioso P."/>
        </authorList>
    </citation>
    <scope>NUCLEOTIDE SEQUENCE [GENOMIC DNA] (ISOFORM 1)</scope>
    <source>
        <strain>cv. Wassilewskija</strain>
    </source>
</reference>
<reference key="3">
    <citation type="journal article" date="2000" name="Nature">
        <title>Sequence and analysis of chromosome 3 of the plant Arabidopsis thaliana.</title>
        <authorList>
            <person name="Salanoubat M."/>
            <person name="Lemcke K."/>
            <person name="Rieger M."/>
            <person name="Ansorge W."/>
            <person name="Unseld M."/>
            <person name="Fartmann B."/>
            <person name="Valle G."/>
            <person name="Bloecker H."/>
            <person name="Perez-Alonso M."/>
            <person name="Obermaier B."/>
            <person name="Delseny M."/>
            <person name="Boutry M."/>
            <person name="Grivell L.A."/>
            <person name="Mache R."/>
            <person name="Puigdomenech P."/>
            <person name="De Simone V."/>
            <person name="Choisne N."/>
            <person name="Artiguenave F."/>
            <person name="Robert C."/>
            <person name="Brottier P."/>
            <person name="Wincker P."/>
            <person name="Cattolico L."/>
            <person name="Weissenbach J."/>
            <person name="Saurin W."/>
            <person name="Quetier F."/>
            <person name="Schaefer M."/>
            <person name="Mueller-Auer S."/>
            <person name="Gabel C."/>
            <person name="Fuchs M."/>
            <person name="Benes V."/>
            <person name="Wurmbach E."/>
            <person name="Drzonek H."/>
            <person name="Erfle H."/>
            <person name="Jordan N."/>
            <person name="Bangert S."/>
            <person name="Wiedelmann R."/>
            <person name="Kranz H."/>
            <person name="Voss H."/>
            <person name="Holland R."/>
            <person name="Brandt P."/>
            <person name="Nyakatura G."/>
            <person name="Vezzi A."/>
            <person name="D'Angelo M."/>
            <person name="Pallavicini A."/>
            <person name="Toppo S."/>
            <person name="Simionati B."/>
            <person name="Conrad A."/>
            <person name="Hornischer K."/>
            <person name="Kauer G."/>
            <person name="Loehnert T.-H."/>
            <person name="Nordsiek G."/>
            <person name="Reichelt J."/>
            <person name="Scharfe M."/>
            <person name="Schoen O."/>
            <person name="Bargues M."/>
            <person name="Terol J."/>
            <person name="Climent J."/>
            <person name="Navarro P."/>
            <person name="Collado C."/>
            <person name="Perez-Perez A."/>
            <person name="Ottenwaelder B."/>
            <person name="Duchemin D."/>
            <person name="Cooke R."/>
            <person name="Laudie M."/>
            <person name="Berger-Llauro C."/>
            <person name="Purnelle B."/>
            <person name="Masuy D."/>
            <person name="de Haan M."/>
            <person name="Maarse A.C."/>
            <person name="Alcaraz J.-P."/>
            <person name="Cottet A."/>
            <person name="Casacuberta E."/>
            <person name="Monfort A."/>
            <person name="Argiriou A."/>
            <person name="Flores M."/>
            <person name="Liguori R."/>
            <person name="Vitale D."/>
            <person name="Mannhaupt G."/>
            <person name="Haase D."/>
            <person name="Schoof H."/>
            <person name="Rudd S."/>
            <person name="Zaccaria P."/>
            <person name="Mewes H.-W."/>
            <person name="Mayer K.F.X."/>
            <person name="Kaul S."/>
            <person name="Town C.D."/>
            <person name="Koo H.L."/>
            <person name="Tallon L.J."/>
            <person name="Jenkins J."/>
            <person name="Rooney T."/>
            <person name="Rizzo M."/>
            <person name="Walts A."/>
            <person name="Utterback T."/>
            <person name="Fujii C.Y."/>
            <person name="Shea T.P."/>
            <person name="Creasy T.H."/>
            <person name="Haas B."/>
            <person name="Maiti R."/>
            <person name="Wu D."/>
            <person name="Peterson J."/>
            <person name="Van Aken S."/>
            <person name="Pai G."/>
            <person name="Militscher J."/>
            <person name="Sellers P."/>
            <person name="Gill J.E."/>
            <person name="Feldblyum T.V."/>
            <person name="Preuss D."/>
            <person name="Lin X."/>
            <person name="Nierman W.C."/>
            <person name="Salzberg S.L."/>
            <person name="White O."/>
            <person name="Venter J.C."/>
            <person name="Fraser C.M."/>
            <person name="Kaneko T."/>
            <person name="Nakamura Y."/>
            <person name="Sato S."/>
            <person name="Kato T."/>
            <person name="Asamizu E."/>
            <person name="Sasamoto S."/>
            <person name="Kimura T."/>
            <person name="Idesawa K."/>
            <person name="Kawashima K."/>
            <person name="Kishida Y."/>
            <person name="Kiyokawa C."/>
            <person name="Kohara M."/>
            <person name="Matsumoto M."/>
            <person name="Matsuno A."/>
            <person name="Muraki A."/>
            <person name="Nakayama S."/>
            <person name="Nakazaki N."/>
            <person name="Shinpo S."/>
            <person name="Takeuchi C."/>
            <person name="Wada T."/>
            <person name="Watanabe A."/>
            <person name="Yamada M."/>
            <person name="Yasuda M."/>
            <person name="Tabata S."/>
        </authorList>
    </citation>
    <scope>NUCLEOTIDE SEQUENCE [LARGE SCALE GENOMIC DNA]</scope>
    <source>
        <strain>cv. Columbia</strain>
    </source>
</reference>
<reference key="4">
    <citation type="journal article" date="2017" name="Plant J.">
        <title>Araport11: a complete reannotation of the Arabidopsis thaliana reference genome.</title>
        <authorList>
            <person name="Cheng C.Y."/>
            <person name="Krishnakumar V."/>
            <person name="Chan A.P."/>
            <person name="Thibaud-Nissen F."/>
            <person name="Schobel S."/>
            <person name="Town C.D."/>
        </authorList>
    </citation>
    <scope>GENOME REANNOTATION</scope>
    <source>
        <strain>cv. Columbia</strain>
    </source>
</reference>
<reference key="5">
    <citation type="journal article" date="2002" name="Science">
        <title>Functional annotation of a full-length Arabidopsis cDNA collection.</title>
        <authorList>
            <person name="Seki M."/>
            <person name="Narusaka M."/>
            <person name="Kamiya A."/>
            <person name="Ishida J."/>
            <person name="Satou M."/>
            <person name="Sakurai T."/>
            <person name="Nakajima M."/>
            <person name="Enju A."/>
            <person name="Akiyama K."/>
            <person name="Oono Y."/>
            <person name="Muramatsu M."/>
            <person name="Hayashizaki Y."/>
            <person name="Kawai J."/>
            <person name="Carninci P."/>
            <person name="Itoh M."/>
            <person name="Ishii Y."/>
            <person name="Arakawa T."/>
            <person name="Shibata K."/>
            <person name="Shinagawa A."/>
            <person name="Shinozaki K."/>
        </authorList>
    </citation>
    <scope>NUCLEOTIDE SEQUENCE [LARGE SCALE MRNA] (ISOFORM 2)</scope>
    <source>
        <strain>cv. Columbia</strain>
    </source>
</reference>
<reference key="6">
    <citation type="journal article" date="2002" name="Plant Physiol.">
        <title>Inactivation of the phloem-specific Dof zinc finger gene DAG1 affects response to light and integrity of the testa of Arabidopsis seeds.</title>
        <authorList>
            <person name="Papi M."/>
            <person name="Sabatini S."/>
            <person name="Altamura M.M."/>
            <person name="Hennig L."/>
            <person name="Schaefer E."/>
            <person name="Costantino P."/>
            <person name="Vittorioso P."/>
        </authorList>
    </citation>
    <scope>CHARACTERIZATION</scope>
</reference>
<reference key="7">
    <citation type="journal article" date="2002" name="Trends Plant Sci.">
        <title>The Dof family of plant transcription factors.</title>
        <authorList>
            <person name="Yanagisawa S."/>
        </authorList>
    </citation>
    <scope>GENE FAMILY</scope>
    <scope>NOMENCLATURE</scope>
</reference>
<accession>Q43385</accession>
<accession>Q8GYW3</accession>
<accession>Q9SAF9</accession>
<protein>
    <recommendedName>
        <fullName>Dof zinc finger protein DOF3.7</fullName>
        <shortName>AtDOF3.7</shortName>
    </recommendedName>
    <alternativeName>
        <fullName>Dof affecting germination 1</fullName>
    </alternativeName>
    <alternativeName>
        <fullName>RolB domain B factor a</fullName>
    </alternativeName>
    <alternativeName>
        <fullName>Transcription factor BBFa</fullName>
        <shortName>AtBBFa</shortName>
    </alternativeName>
</protein>
<evidence type="ECO:0000255" key="1">
    <source>
        <dbReference type="PROSITE-ProRule" id="PRU00071"/>
    </source>
</evidence>
<evidence type="ECO:0000256" key="2">
    <source>
        <dbReference type="SAM" id="MobiDB-lite"/>
    </source>
</evidence>
<evidence type="ECO:0000303" key="3">
    <source>
    </source>
</evidence>
<evidence type="ECO:0000305" key="4"/>
<gene>
    <name type="primary">DOF3.7</name>
    <name type="synonym">BBFA</name>
    <name type="synonym">DAG1</name>
    <name type="ordered locus">At3g61850</name>
    <name type="ORF">F21F14.20</name>
</gene>
<feature type="chain" id="PRO_0000074283" description="Dof zinc finger protein DOF3.7">
    <location>
        <begin position="1"/>
        <end position="296"/>
    </location>
</feature>
<feature type="zinc finger region" description="Dof-type" evidence="1">
    <location>
        <begin position="74"/>
        <end position="128"/>
    </location>
</feature>
<feature type="region of interest" description="Disordered" evidence="2">
    <location>
        <begin position="41"/>
        <end position="69"/>
    </location>
</feature>
<feature type="region of interest" description="Disordered" evidence="2">
    <location>
        <begin position="115"/>
        <end position="146"/>
    </location>
</feature>
<feature type="compositionally biased region" description="Low complexity" evidence="2">
    <location>
        <begin position="45"/>
        <end position="62"/>
    </location>
</feature>
<feature type="compositionally biased region" description="Polar residues" evidence="2">
    <location>
        <begin position="129"/>
        <end position="138"/>
    </location>
</feature>
<feature type="binding site" evidence="1">
    <location>
        <position position="76"/>
    </location>
    <ligand>
        <name>Zn(2+)</name>
        <dbReference type="ChEBI" id="CHEBI:29105"/>
    </ligand>
</feature>
<feature type="binding site" evidence="1">
    <location>
        <position position="79"/>
    </location>
    <ligand>
        <name>Zn(2+)</name>
        <dbReference type="ChEBI" id="CHEBI:29105"/>
    </ligand>
</feature>
<feature type="binding site" evidence="1">
    <location>
        <position position="101"/>
    </location>
    <ligand>
        <name>Zn(2+)</name>
        <dbReference type="ChEBI" id="CHEBI:29105"/>
    </ligand>
</feature>
<feature type="binding site" evidence="1">
    <location>
        <position position="104"/>
    </location>
    <ligand>
        <name>Zn(2+)</name>
        <dbReference type="ChEBI" id="CHEBI:29105"/>
    </ligand>
</feature>
<feature type="splice variant" id="VSP_008898" description="In isoform 2." evidence="3">
    <location>
        <begin position="1"/>
        <end position="12"/>
    </location>
</feature>
<comment type="function">
    <text>Transcription factor specifically involved in the maternal control of seed germination. Regulates transcription by binding to a 5'-AA[AG]G-3' consensus core sequence. May ensure the inactivity of a component that would be activated to trigger germination as a consequence of red light perception.</text>
</comment>
<comment type="subcellular location">
    <subcellularLocation>
        <location evidence="4">Nucleus</location>
    </subcellularLocation>
</comment>
<comment type="alternative products">
    <event type="alternative splicing"/>
    <isoform>
        <id>Q43385-1</id>
        <name>1</name>
        <sequence type="displayed"/>
    </isoform>
    <isoform>
        <id>Q43385-2</id>
        <name>2</name>
        <sequence type="described" ref="VSP_008898"/>
    </isoform>
</comment>
<comment type="tissue specificity">
    <text>Expressed in the phloem of the mother plant, including in roots, stem, leaves and flowers, but not present in the seed and embryo. In maturing siliques, found all through the funiculus connecting the placenta to the ovule, but not in the ovule.</text>
</comment>
<comment type="developmental stage">
    <text>Turned off in siliques when they reached full maturation. Not expressed in developing or mature embryos.</text>
</comment>
<comment type="miscellaneous">
    <text>The regulatory role of DOF3.7/DAG1 appears to be opposite to that of DOF2.5/DAG2. Both zinc finger proteins may act on a maternal switch that controls seed germination, possibly by regulating the same gene(s).</text>
</comment>
<name>DOF37_ARATH</name>
<sequence length="296" mass="32966">MDATKWTQGFQEMINVKPMEQMISSTNNNTPQQQPTFIATNTRPNATASNGGSGGNTNNTATMETRKARPQEKVNCPRCNSTNTKFCYYNNYSLTQPRYFCKGCRRYWTEGGSLRNVPVGGSSRKNKRSSTPLASPSNPKLPDLNPPILFSSQIPNKSNKDLNLLSFPVMQDHHHHALELLRSNGVSSRGMNTFLPGQMMDSNSVLYSSLGFPTMPDYKQSNNNLSFSIDHHQGIGHNTINSNQRAQDNNDDMNGASRVLFPFSDMKELSSTTQEKSHGNNTYWNGMFSNTGGSSW</sequence>
<organism>
    <name type="scientific">Arabidopsis thaliana</name>
    <name type="common">Mouse-ear cress</name>
    <dbReference type="NCBI Taxonomy" id="3702"/>
    <lineage>
        <taxon>Eukaryota</taxon>
        <taxon>Viridiplantae</taxon>
        <taxon>Streptophyta</taxon>
        <taxon>Embryophyta</taxon>
        <taxon>Tracheophyta</taxon>
        <taxon>Spermatophyta</taxon>
        <taxon>Magnoliopsida</taxon>
        <taxon>eudicotyledons</taxon>
        <taxon>Gunneridae</taxon>
        <taxon>Pentapetalae</taxon>
        <taxon>rosids</taxon>
        <taxon>malvids</taxon>
        <taxon>Brassicales</taxon>
        <taxon>Brassicaceae</taxon>
        <taxon>Camelineae</taxon>
        <taxon>Arabidopsis</taxon>
    </lineage>
</organism>